<name>PER_DROMA</name>
<comment type="function">
    <text evidence="1">Essential for biological clock functions. Determines the period length of circadian and ultradian rhythms; an increase in PER dosage leads to shortened circadian rhythms and a decrease leads to lengthened circadian rhythms. Essential for the circadian rhythmicity of locomotor activity, eclosion behavior, and for the rhythmic component of the male courtship song that originates in the thoracic nervous system. The biological cycle depends on the rhythmic formation and nuclear localization of the TIM-PER complex. Light induces the degradation of TIM, which promotes elimination of PER. Nuclear activity of the heterodimer coordinatively regulates PER and TIM transcription through a negative feedback loop. Behaves as a negative element in circadian transcriptional loop. Does not appear to bind DNA, suggesting indirect transcriptional inhibition (By similarity).</text>
</comment>
<comment type="subunit">
    <text evidence="1">Forms a heterodimer with timeless (TIM); the complex then translocates into the nucleus.</text>
</comment>
<comment type="subcellular location">
    <subcellularLocation>
        <location evidence="1">Nucleus</location>
    </subcellularLocation>
    <subcellularLocation>
        <location evidence="1">Cytoplasm</location>
        <location evidence="1">Perinuclear region</location>
    </subcellularLocation>
    <text evidence="1">Nuclear at specific periods of the day. First accumulates in the perinuclear region about one hour before translocation into the nucleus. Interaction with Tim is required for nuclear localization (By similarity).</text>
</comment>
<comment type="domain">
    <text evidence="1">The run of Gly-Thr is implicated in the maintenance of circadian period at different temperatures. Deletion of the repeat leads to a shortening of the courtship song cycle period, and thus could be important for determining features of species-specific mating behavior (By similarity).</text>
</comment>
<comment type="PTM">
    <text evidence="1">Phosphorylated with a circadian rhythmicity, probably by the double-time protein (dbt). Phosphorylation could be implicated in the stability of per monomer and in the formation of heterodimer per-tim (By similarity).</text>
</comment>
<comment type="miscellaneous">
    <text>The sequence shown here is that of clones MA-1, MA-2, MA-4 and MA-5.</text>
</comment>
<feature type="chain" id="PRO_0000162595" description="Period circadian protein">
    <location>
        <begin position="1" status="less than"/>
        <end position="676" status="greater than"/>
    </location>
</feature>
<feature type="domain" description="PAS 1" evidence="3">
    <location>
        <begin position="224"/>
        <end position="359"/>
    </location>
</feature>
<feature type="domain" description="PAS 2" evidence="3">
    <location>
        <begin position="377"/>
        <end position="483"/>
    </location>
</feature>
<feature type="repeat" description="1">
    <location>
        <begin position="589"/>
        <end position="590"/>
    </location>
</feature>
<feature type="repeat" description="2">
    <location>
        <begin position="592"/>
        <end position="593"/>
    </location>
</feature>
<feature type="repeat" description="3">
    <location>
        <begin position="594"/>
        <end position="595"/>
    </location>
</feature>
<feature type="repeat" description="4">
    <location>
        <begin position="596"/>
        <end position="597"/>
    </location>
</feature>
<feature type="repeat" description="5">
    <location>
        <begin position="598"/>
        <end position="599"/>
    </location>
</feature>
<feature type="repeat" description="6">
    <location>
        <begin position="600"/>
        <end position="601"/>
    </location>
</feature>
<feature type="repeat" description="7">
    <location>
        <begin position="602"/>
        <end position="603"/>
    </location>
</feature>
<feature type="repeat" description="8">
    <location>
        <begin position="604"/>
        <end position="605"/>
    </location>
</feature>
<feature type="repeat" description="9">
    <location>
        <begin position="606"/>
        <end position="607"/>
    </location>
</feature>
<feature type="repeat" description="10">
    <location>
        <begin position="608"/>
        <end position="609"/>
    </location>
</feature>
<feature type="repeat" description="11">
    <location>
        <begin position="610"/>
        <end position="611"/>
    </location>
</feature>
<feature type="repeat" description="12">
    <location>
        <begin position="612"/>
        <end position="613"/>
    </location>
</feature>
<feature type="repeat" description="13">
    <location>
        <begin position="614"/>
        <end position="615"/>
    </location>
</feature>
<feature type="repeat" description="14">
    <location>
        <begin position="616"/>
        <end position="617"/>
    </location>
</feature>
<feature type="repeat" description="15">
    <location>
        <begin position="618"/>
        <end position="619"/>
    </location>
</feature>
<feature type="repeat" description="16">
    <location>
        <begin position="620"/>
        <end position="621"/>
    </location>
</feature>
<feature type="repeat" description="17">
    <location>
        <begin position="622"/>
        <end position="623"/>
    </location>
</feature>
<feature type="repeat" description="18">
    <location>
        <begin position="624"/>
        <end position="625"/>
    </location>
</feature>
<feature type="repeat" description="19">
    <location>
        <begin position="626"/>
        <end position="627"/>
    </location>
</feature>
<feature type="repeat" description="20">
    <location>
        <begin position="628"/>
        <end position="629"/>
    </location>
</feature>
<feature type="repeat" description="21">
    <location>
        <begin position="630"/>
        <end position="631"/>
    </location>
</feature>
<feature type="repeat" description="22">
    <location>
        <begin position="632"/>
        <end position="633"/>
    </location>
</feature>
<feature type="repeat" description="23">
    <location>
        <begin position="634"/>
        <end position="635"/>
    </location>
</feature>
<feature type="repeat" description="24">
    <location>
        <begin position="636"/>
        <end position="637"/>
    </location>
</feature>
<feature type="repeat" description="25">
    <location>
        <begin position="638"/>
        <end position="639"/>
    </location>
</feature>
<feature type="repeat" description="26">
    <location>
        <begin position="640"/>
        <end position="641"/>
    </location>
</feature>
<feature type="repeat" description="27; approximate">
    <location>
        <begin position="642"/>
        <end position="643"/>
    </location>
</feature>
<feature type="repeat" description="28">
    <location>
        <begin position="644"/>
        <end position="645"/>
    </location>
</feature>
<feature type="region of interest" description="Disordered" evidence="4">
    <location>
        <begin position="1"/>
        <end position="161"/>
    </location>
</feature>
<feature type="region of interest" description="Disordered" evidence="4">
    <location>
        <begin position="583"/>
        <end position="676"/>
    </location>
</feature>
<feature type="region of interest" description="28 X 2 AA approximate tandem repeats of G-T">
    <location>
        <begin position="589"/>
        <end position="645"/>
    </location>
</feature>
<feature type="short sequence motif" description="Nuclear localization signal" evidence="2">
    <location>
        <begin position="53"/>
        <end position="66"/>
    </location>
</feature>
<feature type="compositionally biased region" description="Low complexity" evidence="4">
    <location>
        <begin position="1"/>
        <end position="34"/>
    </location>
</feature>
<feature type="compositionally biased region" description="Basic residues" evidence="4">
    <location>
        <begin position="53"/>
        <end position="66"/>
    </location>
</feature>
<feature type="compositionally biased region" description="Basic and acidic residues" evidence="4">
    <location>
        <begin position="108"/>
        <end position="120"/>
    </location>
</feature>
<feature type="compositionally biased region" description="Gly residues" evidence="4">
    <location>
        <begin position="589"/>
        <end position="643"/>
    </location>
</feature>
<feature type="compositionally biased region" description="Low complexity" evidence="4">
    <location>
        <begin position="644"/>
        <end position="654"/>
    </location>
</feature>
<feature type="sequence variant" description="In strain: MA-6.">
    <original>S</original>
    <variation>C</variation>
    <location>
        <position position="24"/>
    </location>
</feature>
<feature type="sequence variant" description="In strain: MA-3.">
    <original>D</original>
    <variation>N</variation>
    <location>
        <position position="57"/>
    </location>
</feature>
<feature type="non-consecutive residues" evidence="5">
    <location>
        <begin position="559"/>
        <end position="560"/>
    </location>
</feature>
<feature type="non-terminal residue">
    <location>
        <position position="1"/>
    </location>
</feature>
<feature type="non-terminal residue">
    <location>
        <position position="676"/>
    </location>
</feature>
<organism>
    <name type="scientific">Drosophila mauritiana</name>
    <name type="common">Fruit fly</name>
    <dbReference type="NCBI Taxonomy" id="7226"/>
    <lineage>
        <taxon>Eukaryota</taxon>
        <taxon>Metazoa</taxon>
        <taxon>Ecdysozoa</taxon>
        <taxon>Arthropoda</taxon>
        <taxon>Hexapoda</taxon>
        <taxon>Insecta</taxon>
        <taxon>Pterygota</taxon>
        <taxon>Neoptera</taxon>
        <taxon>Endopterygota</taxon>
        <taxon>Diptera</taxon>
        <taxon>Brachycera</taxon>
        <taxon>Muscomorpha</taxon>
        <taxon>Ephydroidea</taxon>
        <taxon>Drosophilidae</taxon>
        <taxon>Drosophila</taxon>
        <taxon>Sophophora</taxon>
    </lineage>
</organism>
<dbReference type="EMBL" id="L07811">
    <property type="protein sequence ID" value="AAA28778.1"/>
    <property type="molecule type" value="Genomic_DNA"/>
</dbReference>
<dbReference type="EMBL" id="L07812">
    <property type="protein sequence ID" value="AAA28784.1"/>
    <property type="molecule type" value="Genomic_DNA"/>
</dbReference>
<dbReference type="EMBL" id="L07813">
    <property type="protein sequence ID" value="AAA28783.1"/>
    <property type="molecule type" value="Genomic_DNA"/>
</dbReference>
<dbReference type="EMBL" id="L07814">
    <property type="protein sequence ID" value="AAA28782.1"/>
    <property type="molecule type" value="Genomic_DNA"/>
</dbReference>
<dbReference type="EMBL" id="L07815">
    <property type="protein sequence ID" value="AAA28781.1"/>
    <property type="molecule type" value="Genomic_DNA"/>
</dbReference>
<dbReference type="EMBL" id="L07816">
    <property type="protein sequence ID" value="AAA28780.1"/>
    <property type="molecule type" value="Genomic_DNA"/>
</dbReference>
<dbReference type="EMBL" id="S53294">
    <property type="protein sequence ID" value="AAB25026.2"/>
    <property type="molecule type" value="Genomic_DNA"/>
</dbReference>
<dbReference type="PIR" id="S52935">
    <property type="entry name" value="S52935"/>
</dbReference>
<dbReference type="PIR" id="S52937">
    <property type="entry name" value="S52937"/>
</dbReference>
<dbReference type="PIR" id="S52938">
    <property type="entry name" value="S52938"/>
</dbReference>
<dbReference type="PIR" id="S52940">
    <property type="entry name" value="S52940"/>
</dbReference>
<dbReference type="SMR" id="Q03353"/>
<dbReference type="EnsemblMetazoa" id="XM_033316475.1">
    <property type="protein sequence ID" value="XP_033172366.1"/>
    <property type="gene ID" value="LOC117148827"/>
</dbReference>
<dbReference type="Proteomes" id="UP000515162">
    <property type="component" value="Unplaced"/>
</dbReference>
<dbReference type="GO" id="GO:0005634">
    <property type="term" value="C:nucleus"/>
    <property type="evidence" value="ECO:0007669"/>
    <property type="project" value="UniProtKB-SubCell"/>
</dbReference>
<dbReference type="GO" id="GO:0048471">
    <property type="term" value="C:perinuclear region of cytoplasm"/>
    <property type="evidence" value="ECO:0007669"/>
    <property type="project" value="UniProtKB-SubCell"/>
</dbReference>
<dbReference type="GO" id="GO:0000976">
    <property type="term" value="F:transcription cis-regulatory region binding"/>
    <property type="evidence" value="ECO:0007669"/>
    <property type="project" value="TreeGrafter"/>
</dbReference>
<dbReference type="GO" id="GO:0001222">
    <property type="term" value="F:transcription corepressor binding"/>
    <property type="evidence" value="ECO:0007669"/>
    <property type="project" value="TreeGrafter"/>
</dbReference>
<dbReference type="GO" id="GO:0032922">
    <property type="term" value="P:circadian regulation of gene expression"/>
    <property type="evidence" value="ECO:0007669"/>
    <property type="project" value="TreeGrafter"/>
</dbReference>
<dbReference type="GO" id="GO:0043153">
    <property type="term" value="P:entrainment of circadian clock by photoperiod"/>
    <property type="evidence" value="ECO:0007669"/>
    <property type="project" value="TreeGrafter"/>
</dbReference>
<dbReference type="GO" id="GO:0000122">
    <property type="term" value="P:negative regulation of transcription by RNA polymerase II"/>
    <property type="evidence" value="ECO:0007669"/>
    <property type="project" value="TreeGrafter"/>
</dbReference>
<dbReference type="CDD" id="cd00130">
    <property type="entry name" value="PAS"/>
    <property type="match status" value="2"/>
</dbReference>
<dbReference type="FunFam" id="1.20.5.770:FF:000001">
    <property type="entry name" value="Period circadian protein"/>
    <property type="match status" value="1"/>
</dbReference>
<dbReference type="FunFam" id="3.30.450.20:FF:000066">
    <property type="entry name" value="Period circadian protein"/>
    <property type="match status" value="1"/>
</dbReference>
<dbReference type="FunFam" id="3.30.450.20:FF:000072">
    <property type="entry name" value="Period circadian protein"/>
    <property type="match status" value="1"/>
</dbReference>
<dbReference type="Gene3D" id="3.30.450.20">
    <property type="entry name" value="PAS domain"/>
    <property type="match status" value="2"/>
</dbReference>
<dbReference type="Gene3D" id="1.20.5.770">
    <property type="entry name" value="Single helix bin"/>
    <property type="match status" value="1"/>
</dbReference>
<dbReference type="InterPro" id="IPR000014">
    <property type="entry name" value="PAS"/>
</dbReference>
<dbReference type="InterPro" id="IPR035965">
    <property type="entry name" value="PAS-like_dom_sf"/>
</dbReference>
<dbReference type="InterPro" id="IPR013767">
    <property type="entry name" value="PAS_fold"/>
</dbReference>
<dbReference type="InterPro" id="IPR050760">
    <property type="entry name" value="Period_circadian_regulator"/>
</dbReference>
<dbReference type="PANTHER" id="PTHR11269">
    <property type="entry name" value="PERIOD CIRCADIAN PROTEIN"/>
    <property type="match status" value="1"/>
</dbReference>
<dbReference type="PANTHER" id="PTHR11269:SF16">
    <property type="entry name" value="PERIOD CIRCADIAN PROTEIN"/>
    <property type="match status" value="1"/>
</dbReference>
<dbReference type="Pfam" id="PF00989">
    <property type="entry name" value="PAS"/>
    <property type="match status" value="1"/>
</dbReference>
<dbReference type="Pfam" id="PF14598">
    <property type="entry name" value="PAS_11"/>
    <property type="match status" value="1"/>
</dbReference>
<dbReference type="SMART" id="SM00091">
    <property type="entry name" value="PAS"/>
    <property type="match status" value="2"/>
</dbReference>
<dbReference type="SUPFAM" id="SSF55785">
    <property type="entry name" value="PYP-like sensor domain (PAS domain)"/>
    <property type="match status" value="2"/>
</dbReference>
<dbReference type="PROSITE" id="PS50112">
    <property type="entry name" value="PAS"/>
    <property type="match status" value="2"/>
</dbReference>
<evidence type="ECO:0000250" key="1"/>
<evidence type="ECO:0000255" key="2"/>
<evidence type="ECO:0000255" key="3">
    <source>
        <dbReference type="PROSITE-ProRule" id="PRU00140"/>
    </source>
</evidence>
<evidence type="ECO:0000256" key="4">
    <source>
        <dbReference type="SAM" id="MobiDB-lite"/>
    </source>
</evidence>
<evidence type="ECO:0000305" key="5"/>
<proteinExistence type="inferred from homology"/>
<protein>
    <recommendedName>
        <fullName>Period circadian protein</fullName>
    </recommendedName>
</protein>
<keyword id="KW-0090">Biological rhythms</keyword>
<keyword id="KW-0963">Cytoplasm</keyword>
<keyword id="KW-0539">Nucleus</keyword>
<keyword id="KW-0597">Phosphoprotein</keyword>
<keyword id="KW-0677">Repeat</keyword>
<sequence length="676" mass="71004">KVSDSAYSNSCSNSQSQRSGSSKSRLSGSHSSGSSGYGGKPSTQASSSDMIIKRNKDKSRKKKKNKGAGQGAGQAQTLISASTSLEGRDEEKPRPSGTGCVEQQICRELQDQQHGEDHSEPQATEQLQQEEEDQSGSESEADRVEGVAKSEAAQSFPIPSPLSVTIVPPSMGGCGGVGHAAGLDSGLAKFDKTWEAGPGKLESMTGVGAAAAGTGQRGERVKEDSFCCVISMHDGIVLYTTPSITDVLGYPRDMWLGRSFIDFVHLKDRATFASQITTGIPIAESRGSVPKDAKSTFCVMLRRYRGLKSGGFGVIGRPVSYEPFRLGLTFREAPEEARPDNYMVSNGTNMLLVICATPIKSSYKVPDEILSQKSPKFAIRHTATGIISHVDSAAVSALGYLPQDLIGRSIMDFYHHEDLSVMKETYETVMKKGQTAGASFCSKPYRFLIQNGCYVLLETEWTSFVNPWSRKLEFVVGHHRVFQGPKQCNVFEAAPTCKLKISEEAQSRNTRIKEDIVKRLAETVSRPSDTVKQEVSRRCQALASFMETLMDEVSRADLKEGSGGSGSSGNFTTASNIHMSSVTNTSIAGTGGTGTGTGTGTGTGTGTGTGTGTGTGTGTGTGTGTGTGTGTGTGTGTGTGTGNGTNSCTGTGTTSSSRGGSAAIPPVTLTESLLNK</sequence>
<gene>
    <name type="primary">per</name>
</gene>
<reference key="1">
    <citation type="journal article" date="1993" name="Genetics">
        <title>DNA sequence variation at the period locus within and among species of the Drosophila melanogaster complex.</title>
        <authorList>
            <person name="Kliman R.M."/>
            <person name="Hey J."/>
        </authorList>
    </citation>
    <scope>NUCLEOTIDE SEQUENCE [GENOMIC DNA] OF 1-559</scope>
    <source>
        <strain>MA-1</strain>
        <strain>MA-2</strain>
        <strain>MA-3</strain>
        <strain>MA-4</strain>
        <strain>MA-5</strain>
        <strain>MA-6</strain>
    </source>
</reference>
<reference key="2">
    <citation type="journal article" date="1992" name="J. Mol. Evol.">
        <title>Evolution of the threonine-glycine repeat region of the period gene in the melanogaster species subgroup of Drosophila.</title>
        <authorList>
            <person name="Peixoto A.A."/>
            <person name="Costa R."/>
            <person name="Wheeler D.A."/>
            <person name="Hall J.C."/>
            <person name="Kyriacou C.P."/>
        </authorList>
    </citation>
    <scope>NUCLEOTIDE SEQUENCE [GENOMIC DNA] OF 560-676</scope>
</reference>
<accession>Q03353</accession>
<accession>Q26283</accession>